<name>COBD_DESPS</name>
<comment type="function">
    <text evidence="1">Converts cobyric acid to cobinamide by the addition of aminopropanol on the F carboxylic group.</text>
</comment>
<comment type="pathway">
    <text evidence="1">Cofactor biosynthesis; adenosylcobalamin biosynthesis.</text>
</comment>
<comment type="subcellular location">
    <subcellularLocation>
        <location evidence="1">Cell membrane</location>
        <topology evidence="1">Multi-pass membrane protein</topology>
    </subcellularLocation>
</comment>
<comment type="similarity">
    <text evidence="1">Belongs to the CobD/CbiB family.</text>
</comment>
<reference key="1">
    <citation type="journal article" date="2004" name="Environ. Microbiol.">
        <title>The genome of Desulfotalea psychrophila, a sulfate-reducing bacterium from permanently cold Arctic sediments.</title>
        <authorList>
            <person name="Rabus R."/>
            <person name="Ruepp A."/>
            <person name="Frickey T."/>
            <person name="Rattei T."/>
            <person name="Fartmann B."/>
            <person name="Stark M."/>
            <person name="Bauer M."/>
            <person name="Zibat A."/>
            <person name="Lombardot T."/>
            <person name="Becker I."/>
            <person name="Amann J."/>
            <person name="Gellner K."/>
            <person name="Teeling H."/>
            <person name="Leuschner W.D."/>
            <person name="Gloeckner F.-O."/>
            <person name="Lupas A.N."/>
            <person name="Amann R."/>
            <person name="Klenk H.-P."/>
        </authorList>
    </citation>
    <scope>NUCLEOTIDE SEQUENCE [LARGE SCALE GENOMIC DNA]</scope>
    <source>
        <strain>DSM 12343 / LSv54</strain>
    </source>
</reference>
<accession>Q6ALU7</accession>
<keyword id="KW-1003">Cell membrane</keyword>
<keyword id="KW-0169">Cobalamin biosynthesis</keyword>
<keyword id="KW-0472">Membrane</keyword>
<keyword id="KW-1185">Reference proteome</keyword>
<keyword id="KW-0812">Transmembrane</keyword>
<keyword id="KW-1133">Transmembrane helix</keyword>
<dbReference type="EMBL" id="CR522870">
    <property type="protein sequence ID" value="CAG36678.1"/>
    <property type="molecule type" value="Genomic_DNA"/>
</dbReference>
<dbReference type="RefSeq" id="WP_011189190.1">
    <property type="nucleotide sequence ID" value="NC_006138.1"/>
</dbReference>
<dbReference type="STRING" id="177439.DP1949"/>
<dbReference type="KEGG" id="dps:DP1949"/>
<dbReference type="eggNOG" id="COG1270">
    <property type="taxonomic scope" value="Bacteria"/>
</dbReference>
<dbReference type="HOGENOM" id="CLU_054212_0_0_7"/>
<dbReference type="OrthoDB" id="9811967at2"/>
<dbReference type="UniPathway" id="UPA00148"/>
<dbReference type="Proteomes" id="UP000000602">
    <property type="component" value="Chromosome"/>
</dbReference>
<dbReference type="GO" id="GO:0005886">
    <property type="term" value="C:plasma membrane"/>
    <property type="evidence" value="ECO:0007669"/>
    <property type="project" value="UniProtKB-SubCell"/>
</dbReference>
<dbReference type="GO" id="GO:0015420">
    <property type="term" value="F:ABC-type vitamin B12 transporter activity"/>
    <property type="evidence" value="ECO:0007669"/>
    <property type="project" value="UniProtKB-UniRule"/>
</dbReference>
<dbReference type="GO" id="GO:0048472">
    <property type="term" value="F:threonine-phosphate decarboxylase activity"/>
    <property type="evidence" value="ECO:0007669"/>
    <property type="project" value="InterPro"/>
</dbReference>
<dbReference type="GO" id="GO:0009236">
    <property type="term" value="P:cobalamin biosynthetic process"/>
    <property type="evidence" value="ECO:0007669"/>
    <property type="project" value="UniProtKB-UniRule"/>
</dbReference>
<dbReference type="HAMAP" id="MF_00024">
    <property type="entry name" value="CobD_CbiB"/>
    <property type="match status" value="1"/>
</dbReference>
<dbReference type="InterPro" id="IPR004485">
    <property type="entry name" value="Cobalamin_biosynth_CobD/CbiB"/>
</dbReference>
<dbReference type="NCBIfam" id="TIGR00380">
    <property type="entry name" value="cobal_cbiB"/>
    <property type="match status" value="1"/>
</dbReference>
<dbReference type="PANTHER" id="PTHR34308">
    <property type="entry name" value="COBALAMIN BIOSYNTHESIS PROTEIN CBIB"/>
    <property type="match status" value="1"/>
</dbReference>
<dbReference type="PANTHER" id="PTHR34308:SF1">
    <property type="entry name" value="COBALAMIN BIOSYNTHESIS PROTEIN CBIB"/>
    <property type="match status" value="1"/>
</dbReference>
<dbReference type="Pfam" id="PF03186">
    <property type="entry name" value="CobD_Cbib"/>
    <property type="match status" value="1"/>
</dbReference>
<protein>
    <recommendedName>
        <fullName evidence="1">Cobalamin biosynthesis protein CobD</fullName>
    </recommendedName>
</protein>
<evidence type="ECO:0000255" key="1">
    <source>
        <dbReference type="HAMAP-Rule" id="MF_00024"/>
    </source>
</evidence>
<feature type="chain" id="PRO_1000201946" description="Cobalamin biosynthesis protein CobD">
    <location>
        <begin position="1"/>
        <end position="330"/>
    </location>
</feature>
<feature type="transmembrane region" description="Helical" evidence="1">
    <location>
        <begin position="60"/>
        <end position="80"/>
    </location>
</feature>
<feature type="transmembrane region" description="Helical" evidence="1">
    <location>
        <begin position="153"/>
        <end position="173"/>
    </location>
</feature>
<feature type="transmembrane region" description="Helical" evidence="1">
    <location>
        <begin position="227"/>
        <end position="247"/>
    </location>
</feature>
<feature type="transmembrane region" description="Helical" evidence="1">
    <location>
        <begin position="308"/>
        <end position="328"/>
    </location>
</feature>
<sequence length="330" mass="36562">MFSIKILLAIILDLFLGDPSCYPHPVRCIGLAINRWEKFYRPRVAQPFWAGVLTVCSVLTLVILTLAVFFTLLAIFPPIVTDFAAVLLLYTTVAIKDLKKESMAVYRALIQGEDLPKTRKLLARIVGRDTENLDRPAIIRATVETVGENLADGIIAPLFWAVALSIFAPLLGVKAIVLASVGAMSYKAINTMDSMLGYKNERYILFGRAAARLDDWANWLPARCTALGIVAISFMAGYNGPQAWKIFKRDRYQHTSPNAGHPEAALAGALNIRLCGPSVYFGNIVEKPYIGNALRAIEPDDIRQANRIVLFTTFLLSLLFLLFRFVLTGL</sequence>
<proteinExistence type="inferred from homology"/>
<organism>
    <name type="scientific">Desulfotalea psychrophila (strain LSv54 / DSM 12343)</name>
    <dbReference type="NCBI Taxonomy" id="177439"/>
    <lineage>
        <taxon>Bacteria</taxon>
        <taxon>Pseudomonadati</taxon>
        <taxon>Thermodesulfobacteriota</taxon>
        <taxon>Desulfobulbia</taxon>
        <taxon>Desulfobulbales</taxon>
        <taxon>Desulfocapsaceae</taxon>
        <taxon>Desulfotalea</taxon>
    </lineage>
</organism>
<gene>
    <name evidence="1" type="primary">cobD</name>
    <name type="ordered locus">DP1949</name>
</gene>